<comment type="function">
    <text evidence="1">Converts GTP to 7,8-dihydro-D-neopterin 2',3'-cyclic phosphate, the first intermediate in the biosynthesis of coenzyme methanopterin.</text>
</comment>
<comment type="catalytic activity">
    <reaction evidence="1">
        <text>GTP + H2O = 7,8-dihydroneopterin 2',3'-cyclic phosphate + formate + diphosphate + H(+)</text>
        <dbReference type="Rhea" id="RHEA:25860"/>
        <dbReference type="ChEBI" id="CHEBI:15377"/>
        <dbReference type="ChEBI" id="CHEBI:15378"/>
        <dbReference type="ChEBI" id="CHEBI:15740"/>
        <dbReference type="ChEBI" id="CHEBI:33019"/>
        <dbReference type="ChEBI" id="CHEBI:37565"/>
        <dbReference type="ChEBI" id="CHEBI:58854"/>
        <dbReference type="EC" id="3.5.4.39"/>
    </reaction>
</comment>
<comment type="cofactor">
    <cofactor evidence="1">
        <name>Fe(2+)</name>
        <dbReference type="ChEBI" id="CHEBI:29033"/>
    </cofactor>
    <text evidence="1">Binds 1 Fe(2+) ion per subunit.</text>
</comment>
<comment type="pathway">
    <text evidence="1">Cofactor biosynthesis; 5,6,7,8-tetrahydromethanopterin biosynthesis.</text>
</comment>
<comment type="subunit">
    <text evidence="1">Homodimer.</text>
</comment>
<comment type="similarity">
    <text evidence="1">Belongs to the GTP cyclohydrolase IV family.</text>
</comment>
<feature type="chain" id="PRO_1000068666" description="GTP cyclohydrolase MptA">
    <location>
        <begin position="1"/>
        <end position="315"/>
    </location>
</feature>
<feature type="site" description="May be catalytically important" evidence="1">
    <location>
        <position position="161"/>
    </location>
</feature>
<organism>
    <name type="scientific">Methanococcus maripaludis (strain C5 / ATCC BAA-1333)</name>
    <dbReference type="NCBI Taxonomy" id="402880"/>
    <lineage>
        <taxon>Archaea</taxon>
        <taxon>Methanobacteriati</taxon>
        <taxon>Methanobacteriota</taxon>
        <taxon>Methanomada group</taxon>
        <taxon>Methanococci</taxon>
        <taxon>Methanococcales</taxon>
        <taxon>Methanococcaceae</taxon>
        <taxon>Methanococcus</taxon>
    </lineage>
</organism>
<sequence>MQCNDVQATEPDIKVSLTRVGVTNLKKLVKLKRKNKRDIVLLPTFEVFVDLPSSQKGIHMSRSPEVIEEVVENILLEKEIYGVEDLSVEIVMKLFEKHEYATRAEIMLYSDYMMEEKSPVTQKDSQEIGKIIARAYGVKDENGKIAVKKMVGAEVVGITACPCAQNMLKENAVANLKEKGFSSEEIEKILDSVTIATHNQRGIGTVMIEVPNGYAVGISKIIKIIKNSMSGEVYELLKRSDEAFVVEAAHKNPKFVEDCAREMIKRVVDVFDYLPEDTQVLVRQVNKESIHRHDAFAERNSTIRELRDELKTLTN</sequence>
<gene>
    <name evidence="1" type="primary">mptA</name>
    <name type="ordered locus">MmarC5_1646</name>
</gene>
<name>MPTA_METM5</name>
<dbReference type="EC" id="3.5.4.39" evidence="1"/>
<dbReference type="EMBL" id="CP000609">
    <property type="protein sequence ID" value="ABO35943.1"/>
    <property type="molecule type" value="Genomic_DNA"/>
</dbReference>
<dbReference type="RefSeq" id="WP_011869390.1">
    <property type="nucleotide sequence ID" value="NC_009135.1"/>
</dbReference>
<dbReference type="SMR" id="A4G0F9"/>
<dbReference type="STRING" id="402880.MmarC5_1646"/>
<dbReference type="GeneID" id="4928995"/>
<dbReference type="KEGG" id="mmq:MmarC5_1646"/>
<dbReference type="eggNOG" id="arCOG04301">
    <property type="taxonomic scope" value="Archaea"/>
</dbReference>
<dbReference type="HOGENOM" id="CLU_062816_1_0_2"/>
<dbReference type="OrthoDB" id="53087at2157"/>
<dbReference type="UniPathway" id="UPA00065"/>
<dbReference type="Proteomes" id="UP000000253">
    <property type="component" value="Chromosome"/>
</dbReference>
<dbReference type="GO" id="GO:0003934">
    <property type="term" value="F:GTP cyclohydrolase I activity"/>
    <property type="evidence" value="ECO:0007669"/>
    <property type="project" value="InterPro"/>
</dbReference>
<dbReference type="GO" id="GO:0044682">
    <property type="term" value="F:GTP cyclohydrolase IV activity"/>
    <property type="evidence" value="ECO:0007669"/>
    <property type="project" value="UniProtKB-UniRule"/>
</dbReference>
<dbReference type="GO" id="GO:0005506">
    <property type="term" value="F:iron ion binding"/>
    <property type="evidence" value="ECO:0007669"/>
    <property type="project" value="UniProtKB-UniRule"/>
</dbReference>
<dbReference type="GO" id="GO:2001118">
    <property type="term" value="P:tetrahydromethanopterin biosynthetic process"/>
    <property type="evidence" value="ECO:0007669"/>
    <property type="project" value="UniProtKB-UniRule"/>
</dbReference>
<dbReference type="Gene3D" id="3.10.270.10">
    <property type="entry name" value="Urate Oxidase"/>
    <property type="match status" value="1"/>
</dbReference>
<dbReference type="HAMAP" id="MF_01527_A">
    <property type="entry name" value="GTP_cyclohydrol_A"/>
    <property type="match status" value="1"/>
</dbReference>
<dbReference type="InterPro" id="IPR003801">
    <property type="entry name" value="GTP_cyclohydrolase_FolE2/MptA"/>
</dbReference>
<dbReference type="InterPro" id="IPR022840">
    <property type="entry name" value="GTP_cyclohydrolase_MptA"/>
</dbReference>
<dbReference type="NCBIfam" id="TIGR00294">
    <property type="entry name" value="GTP cyclohydrolase MptA"/>
    <property type="match status" value="1"/>
</dbReference>
<dbReference type="PANTHER" id="PTHR36445">
    <property type="entry name" value="GTP CYCLOHYDROLASE MPTA"/>
    <property type="match status" value="1"/>
</dbReference>
<dbReference type="PANTHER" id="PTHR36445:SF1">
    <property type="entry name" value="GTP CYCLOHYDROLASE MPTA"/>
    <property type="match status" value="1"/>
</dbReference>
<dbReference type="Pfam" id="PF02649">
    <property type="entry name" value="GCHY-1"/>
    <property type="match status" value="1"/>
</dbReference>
<accession>A4G0F9</accession>
<protein>
    <recommendedName>
        <fullName evidence="1">GTP cyclohydrolase MptA</fullName>
        <ecNumber evidence="1">3.5.4.39</ecNumber>
    </recommendedName>
    <alternativeName>
        <fullName evidence="1">GTP cyclohydrolase IV</fullName>
    </alternativeName>
</protein>
<keyword id="KW-0378">Hydrolase</keyword>
<keyword id="KW-0408">Iron</keyword>
<keyword id="KW-0479">Metal-binding</keyword>
<proteinExistence type="inferred from homology"/>
<reference key="1">
    <citation type="submission" date="2007-03" db="EMBL/GenBank/DDBJ databases">
        <title>Complete sequence of chromosome of Methanococcus maripaludis C5.</title>
        <authorList>
            <consortium name="US DOE Joint Genome Institute"/>
            <person name="Copeland A."/>
            <person name="Lucas S."/>
            <person name="Lapidus A."/>
            <person name="Barry K."/>
            <person name="Glavina del Rio T."/>
            <person name="Dalin E."/>
            <person name="Tice H."/>
            <person name="Pitluck S."/>
            <person name="Chertkov O."/>
            <person name="Brettin T."/>
            <person name="Bruce D."/>
            <person name="Han C."/>
            <person name="Detter J.C."/>
            <person name="Schmutz J."/>
            <person name="Larimer F."/>
            <person name="Land M."/>
            <person name="Hauser L."/>
            <person name="Kyrpides N."/>
            <person name="Mikhailova N."/>
            <person name="Sieprawska-Lupa M."/>
            <person name="Whitman W.B."/>
            <person name="Richardson P."/>
        </authorList>
    </citation>
    <scope>NUCLEOTIDE SEQUENCE [LARGE SCALE GENOMIC DNA]</scope>
    <source>
        <strain>C5 / ATCC BAA-1333</strain>
    </source>
</reference>
<evidence type="ECO:0000255" key="1">
    <source>
        <dbReference type="HAMAP-Rule" id="MF_01527"/>
    </source>
</evidence>